<name>Y2657_MYCTF</name>
<organism>
    <name type="scientific">Mycobacterium tuberculosis (strain F11)</name>
    <dbReference type="NCBI Taxonomy" id="336982"/>
    <lineage>
        <taxon>Bacteria</taxon>
        <taxon>Bacillati</taxon>
        <taxon>Actinomycetota</taxon>
        <taxon>Actinomycetes</taxon>
        <taxon>Mycobacteriales</taxon>
        <taxon>Mycobacteriaceae</taxon>
        <taxon>Mycobacterium</taxon>
        <taxon>Mycobacterium tuberculosis complex</taxon>
    </lineage>
</organism>
<proteinExistence type="inferred from homology"/>
<evidence type="ECO:0000255" key="1">
    <source>
        <dbReference type="HAMAP-Rule" id="MF_00010"/>
    </source>
</evidence>
<protein>
    <recommendedName>
        <fullName evidence="1">UPF0060 membrane protein TBFG_12657</fullName>
    </recommendedName>
</protein>
<sequence length="110" mass="11720">MVVRSILLFVLAAVAEIGGAWLVWQGVREQRGWLWAGLGVIALGVYGFFATLQPDAHFGRVLAAYGGVFVAGSLAWGMALDGFRPDRWDVIGALGCMAGVAVIMYAPRGH</sequence>
<reference key="1">
    <citation type="submission" date="2007-04" db="EMBL/GenBank/DDBJ databases">
        <title>The complete genome sequence of Mycobacterium tuberculosis F11.</title>
        <authorList>
            <person name="Birren B."/>
            <person name="Lander E."/>
            <person name="Galagan J."/>
            <person name="Devon K."/>
            <person name="Nusbaum C."/>
            <person name="Borowsky M.L."/>
            <person name="Grabherr M."/>
            <person name="Mauceli E."/>
            <person name="Brockman W."/>
            <person name="Young S."/>
            <person name="LaButti K."/>
            <person name="Pushparaj V."/>
            <person name="Sykes S."/>
            <person name="Baldwin J."/>
            <person name="Fitzgerald M."/>
            <person name="Bloom T."/>
            <person name="Zimmer A."/>
            <person name="Settipalli S."/>
            <person name="Shea T."/>
            <person name="Arachchi H."/>
            <person name="Macdonald P."/>
            <person name="Abouelleil A."/>
            <person name="Lui A."/>
            <person name="Priest M."/>
            <person name="Berlin A."/>
            <person name="Gearin G."/>
            <person name="Brown A."/>
            <person name="Aftuck L."/>
            <person name="Bessette D."/>
            <person name="Allen N."/>
            <person name="Lubonja R."/>
            <person name="Lokyitsang T."/>
            <person name="Matthews C."/>
            <person name="Dunbar C."/>
            <person name="Benamara M."/>
            <person name="Nguyen T."/>
            <person name="Negash T."/>
            <person name="DeCaprio D."/>
            <person name="Crawford M."/>
            <person name="Koehrsen M."/>
            <person name="Engels R."/>
            <person name="Montgomery P."/>
            <person name="Pearson M."/>
            <person name="Howarth C."/>
            <person name="Kodira C."/>
            <person name="Zeng Q."/>
            <person name="Yandava C."/>
            <person name="O'Leary S."/>
            <person name="Alvarado L."/>
            <person name="Victor T."/>
            <person name="Murray M."/>
        </authorList>
    </citation>
    <scope>NUCLEOTIDE SEQUENCE [LARGE SCALE GENOMIC DNA]</scope>
    <source>
        <strain>F11</strain>
    </source>
</reference>
<dbReference type="EMBL" id="CP000717">
    <property type="protein sequence ID" value="ABR06984.1"/>
    <property type="molecule type" value="Genomic_DNA"/>
</dbReference>
<dbReference type="RefSeq" id="WP_003413663.1">
    <property type="nucleotide sequence ID" value="NZ_KK339377.1"/>
</dbReference>
<dbReference type="KEGG" id="mtf:TBFG_12657"/>
<dbReference type="PATRIC" id="fig|336982.11.peg.2938"/>
<dbReference type="HOGENOM" id="CLU_117653_0_1_11"/>
<dbReference type="GO" id="GO:0005886">
    <property type="term" value="C:plasma membrane"/>
    <property type="evidence" value="ECO:0007669"/>
    <property type="project" value="UniProtKB-SubCell"/>
</dbReference>
<dbReference type="HAMAP" id="MF_00010">
    <property type="entry name" value="UPF0060"/>
    <property type="match status" value="1"/>
</dbReference>
<dbReference type="InterPro" id="IPR003844">
    <property type="entry name" value="UPF0060"/>
</dbReference>
<dbReference type="NCBIfam" id="NF002586">
    <property type="entry name" value="PRK02237.1"/>
    <property type="match status" value="1"/>
</dbReference>
<dbReference type="PANTHER" id="PTHR36116">
    <property type="entry name" value="UPF0060 MEMBRANE PROTEIN YNFA"/>
    <property type="match status" value="1"/>
</dbReference>
<dbReference type="PANTHER" id="PTHR36116:SF1">
    <property type="entry name" value="UPF0060 MEMBRANE PROTEIN YNFA"/>
    <property type="match status" value="1"/>
</dbReference>
<dbReference type="Pfam" id="PF02694">
    <property type="entry name" value="UPF0060"/>
    <property type="match status" value="1"/>
</dbReference>
<dbReference type="SUPFAM" id="SSF103481">
    <property type="entry name" value="Multidrug resistance efflux transporter EmrE"/>
    <property type="match status" value="1"/>
</dbReference>
<feature type="chain" id="PRO_0000282236" description="UPF0060 membrane protein TBFG_12657">
    <location>
        <begin position="1"/>
        <end position="110"/>
    </location>
</feature>
<feature type="transmembrane region" description="Helical" evidence="1">
    <location>
        <begin position="6"/>
        <end position="26"/>
    </location>
</feature>
<feature type="transmembrane region" description="Helical" evidence="1">
    <location>
        <begin position="32"/>
        <end position="52"/>
    </location>
</feature>
<feature type="transmembrane region" description="Helical" evidence="1">
    <location>
        <begin position="61"/>
        <end position="81"/>
    </location>
</feature>
<feature type="transmembrane region" description="Helical" evidence="1">
    <location>
        <begin position="90"/>
        <end position="110"/>
    </location>
</feature>
<gene>
    <name type="ordered locus">TBFG_12657</name>
</gene>
<keyword id="KW-1003">Cell membrane</keyword>
<keyword id="KW-0472">Membrane</keyword>
<keyword id="KW-0812">Transmembrane</keyword>
<keyword id="KW-1133">Transmembrane helix</keyword>
<accession>A1QUS1</accession>
<accession>A5WQP5</accession>
<comment type="subcellular location">
    <subcellularLocation>
        <location evidence="1">Cell membrane</location>
        <topology evidence="1">Multi-pass membrane protein</topology>
    </subcellularLocation>
</comment>
<comment type="similarity">
    <text evidence="1">Belongs to the UPF0060 family.</text>
</comment>